<gene>
    <name type="primary">Dhx8</name>
</gene>
<dbReference type="EC" id="3.6.4.13" evidence="2"/>
<dbReference type="EMBL" id="BC132445">
    <property type="protein sequence ID" value="AAI32446.1"/>
    <property type="molecule type" value="mRNA"/>
</dbReference>
<dbReference type="EMBL" id="AL590994">
    <property type="status" value="NOT_ANNOTATED_CDS"/>
    <property type="molecule type" value="Genomic_DNA"/>
</dbReference>
<dbReference type="EMBL" id="AL591436">
    <property type="status" value="NOT_ANNOTATED_CDS"/>
    <property type="molecule type" value="Genomic_DNA"/>
</dbReference>
<dbReference type="CCDS" id="CCDS25479.1"/>
<dbReference type="RefSeq" id="NP_659080.2">
    <property type="nucleotide sequence ID" value="NM_144831.2"/>
</dbReference>
<dbReference type="SMR" id="A2A4P0"/>
<dbReference type="BioGRID" id="229862">
    <property type="interactions" value="14"/>
</dbReference>
<dbReference type="FunCoup" id="A2A4P0">
    <property type="interactions" value="3729"/>
</dbReference>
<dbReference type="IntAct" id="A2A4P0">
    <property type="interactions" value="1"/>
</dbReference>
<dbReference type="MINT" id="A2A4P0"/>
<dbReference type="STRING" id="10090.ENSMUSP00000037251"/>
<dbReference type="iPTMnet" id="A2A4P0"/>
<dbReference type="PhosphoSitePlus" id="A2A4P0"/>
<dbReference type="jPOST" id="A2A4P0"/>
<dbReference type="PaxDb" id="10090-ENSMUSP00000037251"/>
<dbReference type="PeptideAtlas" id="A2A4P0"/>
<dbReference type="ProteomicsDB" id="279534"/>
<dbReference type="Pumba" id="A2A4P0"/>
<dbReference type="Antibodypedia" id="29563">
    <property type="antibodies" value="189 antibodies from 25 providers"/>
</dbReference>
<dbReference type="DNASU" id="217207"/>
<dbReference type="Ensembl" id="ENSMUST00000039152.14">
    <property type="protein sequence ID" value="ENSMUSP00000037251.8"/>
    <property type="gene ID" value="ENSMUSG00000034931.16"/>
</dbReference>
<dbReference type="GeneID" id="217207"/>
<dbReference type="KEGG" id="mmu:217207"/>
<dbReference type="UCSC" id="uc007lpr.1">
    <property type="organism name" value="mouse"/>
</dbReference>
<dbReference type="AGR" id="MGI:1306823"/>
<dbReference type="CTD" id="1659"/>
<dbReference type="MGI" id="MGI:1306823">
    <property type="gene designation" value="Dhx8"/>
</dbReference>
<dbReference type="VEuPathDB" id="HostDB:ENSMUSG00000034931"/>
<dbReference type="eggNOG" id="KOG0922">
    <property type="taxonomic scope" value="Eukaryota"/>
</dbReference>
<dbReference type="GeneTree" id="ENSGT00940000155510"/>
<dbReference type="InParanoid" id="A2A4P0"/>
<dbReference type="OMA" id="MKEVDQV"/>
<dbReference type="OrthoDB" id="10253254at2759"/>
<dbReference type="PhylomeDB" id="A2A4P0"/>
<dbReference type="TreeFam" id="TF300509"/>
<dbReference type="Reactome" id="R-MMU-72163">
    <property type="pathway name" value="mRNA Splicing - Major Pathway"/>
</dbReference>
<dbReference type="BioGRID-ORCS" id="217207">
    <property type="hits" value="25 hits in 82 CRISPR screens"/>
</dbReference>
<dbReference type="ChiTaRS" id="Dhx8">
    <property type="organism name" value="mouse"/>
</dbReference>
<dbReference type="PRO" id="PR:A2A4P0"/>
<dbReference type="Proteomes" id="UP000000589">
    <property type="component" value="Chromosome 11"/>
</dbReference>
<dbReference type="RNAct" id="A2A4P0">
    <property type="molecule type" value="protein"/>
</dbReference>
<dbReference type="Bgee" id="ENSMUSG00000034931">
    <property type="expression patterns" value="Expressed in humerus cartilage element and 217 other cell types or tissues"/>
</dbReference>
<dbReference type="ExpressionAtlas" id="A2A4P0">
    <property type="expression patterns" value="baseline and differential"/>
</dbReference>
<dbReference type="GO" id="GO:0005829">
    <property type="term" value="C:cytosol"/>
    <property type="evidence" value="ECO:0007669"/>
    <property type="project" value="Ensembl"/>
</dbReference>
<dbReference type="GO" id="GO:0016604">
    <property type="term" value="C:nuclear body"/>
    <property type="evidence" value="ECO:0007669"/>
    <property type="project" value="Ensembl"/>
</dbReference>
<dbReference type="GO" id="GO:0005634">
    <property type="term" value="C:nucleus"/>
    <property type="evidence" value="ECO:0000250"/>
    <property type="project" value="UniProtKB"/>
</dbReference>
<dbReference type="GO" id="GO:0071007">
    <property type="term" value="C:U2-type catalytic step 2 spliceosome"/>
    <property type="evidence" value="ECO:0000250"/>
    <property type="project" value="UniProtKB"/>
</dbReference>
<dbReference type="GO" id="GO:0005524">
    <property type="term" value="F:ATP binding"/>
    <property type="evidence" value="ECO:0007669"/>
    <property type="project" value="UniProtKB-KW"/>
</dbReference>
<dbReference type="GO" id="GO:0016887">
    <property type="term" value="F:ATP hydrolysis activity"/>
    <property type="evidence" value="ECO:0007669"/>
    <property type="project" value="RHEA"/>
</dbReference>
<dbReference type="GO" id="GO:0042802">
    <property type="term" value="F:identical protein binding"/>
    <property type="evidence" value="ECO:0007669"/>
    <property type="project" value="Ensembl"/>
</dbReference>
<dbReference type="GO" id="GO:0003676">
    <property type="term" value="F:nucleic acid binding"/>
    <property type="evidence" value="ECO:0007669"/>
    <property type="project" value="InterPro"/>
</dbReference>
<dbReference type="GO" id="GO:0003724">
    <property type="term" value="F:RNA helicase activity"/>
    <property type="evidence" value="ECO:0007669"/>
    <property type="project" value="UniProtKB-EC"/>
</dbReference>
<dbReference type="GO" id="GO:0000398">
    <property type="term" value="P:mRNA splicing, via spliceosome"/>
    <property type="evidence" value="ECO:0000250"/>
    <property type="project" value="UniProtKB"/>
</dbReference>
<dbReference type="CDD" id="cd17971">
    <property type="entry name" value="DEXHc_DHX8"/>
    <property type="match status" value="1"/>
</dbReference>
<dbReference type="CDD" id="cd21691">
    <property type="entry name" value="GH2-like_DHX8"/>
    <property type="match status" value="1"/>
</dbReference>
<dbReference type="CDD" id="cd05684">
    <property type="entry name" value="S1_DHX8_helicase"/>
    <property type="match status" value="1"/>
</dbReference>
<dbReference type="CDD" id="cd18791">
    <property type="entry name" value="SF2_C_RHA"/>
    <property type="match status" value="1"/>
</dbReference>
<dbReference type="FunFam" id="2.40.50.140:FF:000061">
    <property type="entry name" value="ATP-dependent RNA helicase DHX8"/>
    <property type="match status" value="1"/>
</dbReference>
<dbReference type="FunFam" id="1.20.120.1080:FF:000001">
    <property type="entry name" value="Pre-mRNA-splicing factor ATP-dependent RNA helicase"/>
    <property type="match status" value="1"/>
</dbReference>
<dbReference type="FunFam" id="3.40.50.300:FF:000101">
    <property type="entry name" value="Pre-mRNA-splicing factor ATP-dependent RNA helicase"/>
    <property type="match status" value="1"/>
</dbReference>
<dbReference type="FunFam" id="3.40.50.300:FF:000191">
    <property type="entry name" value="Pre-mRNA-splicing factor ATP-dependent RNA helicase"/>
    <property type="match status" value="1"/>
</dbReference>
<dbReference type="Gene3D" id="1.20.120.1080">
    <property type="match status" value="1"/>
</dbReference>
<dbReference type="Gene3D" id="2.40.50.140">
    <property type="entry name" value="Nucleic acid-binding proteins"/>
    <property type="match status" value="1"/>
</dbReference>
<dbReference type="Gene3D" id="3.40.50.300">
    <property type="entry name" value="P-loop containing nucleotide triphosphate hydrolases"/>
    <property type="match status" value="2"/>
</dbReference>
<dbReference type="InterPro" id="IPR011709">
    <property type="entry name" value="DEAD-box_helicase_OB_fold"/>
</dbReference>
<dbReference type="InterPro" id="IPR011545">
    <property type="entry name" value="DEAD/DEAH_box_helicase_dom"/>
</dbReference>
<dbReference type="InterPro" id="IPR044762">
    <property type="entry name" value="DHX8/Prp22_DEXHc"/>
</dbReference>
<dbReference type="InterPro" id="IPR049588">
    <property type="entry name" value="DHX8_GH2-like"/>
</dbReference>
<dbReference type="InterPro" id="IPR002464">
    <property type="entry name" value="DNA/RNA_helicase_DEAH_CS"/>
</dbReference>
<dbReference type="InterPro" id="IPR048333">
    <property type="entry name" value="HA2_WH"/>
</dbReference>
<dbReference type="InterPro" id="IPR007502">
    <property type="entry name" value="Helicase-assoc_dom"/>
</dbReference>
<dbReference type="InterPro" id="IPR014001">
    <property type="entry name" value="Helicase_ATP-bd"/>
</dbReference>
<dbReference type="InterPro" id="IPR001650">
    <property type="entry name" value="Helicase_C-like"/>
</dbReference>
<dbReference type="InterPro" id="IPR012340">
    <property type="entry name" value="NA-bd_OB-fold"/>
</dbReference>
<dbReference type="InterPro" id="IPR027417">
    <property type="entry name" value="P-loop_NTPase"/>
</dbReference>
<dbReference type="InterPro" id="IPR049621">
    <property type="entry name" value="S1_DHX8_helicase"/>
</dbReference>
<dbReference type="InterPro" id="IPR003029">
    <property type="entry name" value="S1_domain"/>
</dbReference>
<dbReference type="PANTHER" id="PTHR18934">
    <property type="entry name" value="ATP-DEPENDENT RNA HELICASE"/>
    <property type="match status" value="1"/>
</dbReference>
<dbReference type="PANTHER" id="PTHR18934:SF85">
    <property type="entry name" value="ATP-DEPENDENT RNA HELICASE DHX8"/>
    <property type="match status" value="1"/>
</dbReference>
<dbReference type="Pfam" id="PF00270">
    <property type="entry name" value="DEAD"/>
    <property type="match status" value="1"/>
</dbReference>
<dbReference type="Pfam" id="PF21010">
    <property type="entry name" value="HA2_C"/>
    <property type="match status" value="1"/>
</dbReference>
<dbReference type="Pfam" id="PF04408">
    <property type="entry name" value="HA2_N"/>
    <property type="match status" value="1"/>
</dbReference>
<dbReference type="Pfam" id="PF00271">
    <property type="entry name" value="Helicase_C"/>
    <property type="match status" value="1"/>
</dbReference>
<dbReference type="Pfam" id="PF07717">
    <property type="entry name" value="OB_NTP_bind"/>
    <property type="match status" value="1"/>
</dbReference>
<dbReference type="Pfam" id="PF00575">
    <property type="entry name" value="S1"/>
    <property type="match status" value="1"/>
</dbReference>
<dbReference type="SMART" id="SM00487">
    <property type="entry name" value="DEXDc"/>
    <property type="match status" value="1"/>
</dbReference>
<dbReference type="SMART" id="SM00847">
    <property type="entry name" value="HA2"/>
    <property type="match status" value="1"/>
</dbReference>
<dbReference type="SMART" id="SM00490">
    <property type="entry name" value="HELICc"/>
    <property type="match status" value="1"/>
</dbReference>
<dbReference type="SMART" id="SM00316">
    <property type="entry name" value="S1"/>
    <property type="match status" value="1"/>
</dbReference>
<dbReference type="SUPFAM" id="SSF50249">
    <property type="entry name" value="Nucleic acid-binding proteins"/>
    <property type="match status" value="1"/>
</dbReference>
<dbReference type="SUPFAM" id="SSF52540">
    <property type="entry name" value="P-loop containing nucleoside triphosphate hydrolases"/>
    <property type="match status" value="1"/>
</dbReference>
<dbReference type="PROSITE" id="PS00690">
    <property type="entry name" value="DEAH_ATP_HELICASE"/>
    <property type="match status" value="1"/>
</dbReference>
<dbReference type="PROSITE" id="PS51192">
    <property type="entry name" value="HELICASE_ATP_BIND_1"/>
    <property type="match status" value="1"/>
</dbReference>
<dbReference type="PROSITE" id="PS51194">
    <property type="entry name" value="HELICASE_CTER"/>
    <property type="match status" value="1"/>
</dbReference>
<dbReference type="PROSITE" id="PS50126">
    <property type="entry name" value="S1"/>
    <property type="match status" value="1"/>
</dbReference>
<accession>A2A4P0</accession>
<feature type="chain" id="PRO_0000330831" description="ATP-dependent RNA helicase DHX8">
    <location>
        <begin position="1"/>
        <end position="1244"/>
    </location>
</feature>
<feature type="domain" description="S1 motif" evidence="4">
    <location>
        <begin position="289"/>
        <end position="360"/>
    </location>
</feature>
<feature type="domain" description="Helicase ATP-binding" evidence="5">
    <location>
        <begin position="599"/>
        <end position="762"/>
    </location>
</feature>
<feature type="domain" description="Helicase C-terminal" evidence="6">
    <location>
        <begin position="780"/>
        <end position="960"/>
    </location>
</feature>
<feature type="region of interest" description="Disordered" evidence="7">
    <location>
        <begin position="152"/>
        <end position="289"/>
    </location>
</feature>
<feature type="region of interest" description="Disordered" evidence="7">
    <location>
        <begin position="361"/>
        <end position="396"/>
    </location>
</feature>
<feature type="short sequence motif" description="DEAH box">
    <location>
        <begin position="709"/>
        <end position="712"/>
    </location>
</feature>
<feature type="compositionally biased region" description="Basic and acidic residues" evidence="7">
    <location>
        <begin position="160"/>
        <end position="169"/>
    </location>
</feature>
<feature type="compositionally biased region" description="Basic residues" evidence="7">
    <location>
        <begin position="170"/>
        <end position="179"/>
    </location>
</feature>
<feature type="compositionally biased region" description="Basic and acidic residues" evidence="7">
    <location>
        <begin position="180"/>
        <end position="220"/>
    </location>
</feature>
<feature type="compositionally biased region" description="Basic residues" evidence="7">
    <location>
        <begin position="221"/>
        <end position="234"/>
    </location>
</feature>
<feature type="compositionally biased region" description="Basic and acidic residues" evidence="7">
    <location>
        <begin position="256"/>
        <end position="283"/>
    </location>
</feature>
<feature type="compositionally biased region" description="Basic and acidic residues" evidence="7">
    <location>
        <begin position="386"/>
        <end position="395"/>
    </location>
</feature>
<feature type="binding site" evidence="5">
    <location>
        <begin position="612"/>
        <end position="619"/>
    </location>
    <ligand>
        <name>ATP</name>
        <dbReference type="ChEBI" id="CHEBI:30616"/>
    </ligand>
</feature>
<feature type="modified residue" description="Phosphoserine" evidence="3">
    <location>
        <position position="419"/>
    </location>
</feature>
<feature type="modified residue" description="Phosphoserine" evidence="3">
    <location>
        <position position="484"/>
    </location>
</feature>
<feature type="cross-link" description="Glycyl lysine isopeptide (Lys-Gly) (interchain with G-Cter in SUMO2)" evidence="3">
    <location>
        <position position="140"/>
    </location>
</feature>
<feature type="cross-link" description="Glycyl lysine isopeptide (Lys-Gly) (interchain with G-Cter in SUMO2)" evidence="3">
    <location>
        <position position="423"/>
    </location>
</feature>
<organism>
    <name type="scientific">Mus musculus</name>
    <name type="common">Mouse</name>
    <dbReference type="NCBI Taxonomy" id="10090"/>
    <lineage>
        <taxon>Eukaryota</taxon>
        <taxon>Metazoa</taxon>
        <taxon>Chordata</taxon>
        <taxon>Craniata</taxon>
        <taxon>Vertebrata</taxon>
        <taxon>Euteleostomi</taxon>
        <taxon>Mammalia</taxon>
        <taxon>Eutheria</taxon>
        <taxon>Euarchontoglires</taxon>
        <taxon>Glires</taxon>
        <taxon>Rodentia</taxon>
        <taxon>Myomorpha</taxon>
        <taxon>Muroidea</taxon>
        <taxon>Muridae</taxon>
        <taxon>Murinae</taxon>
        <taxon>Mus</taxon>
        <taxon>Mus</taxon>
    </lineage>
</organism>
<evidence type="ECO:0000250" key="1"/>
<evidence type="ECO:0000250" key="2">
    <source>
        <dbReference type="UniProtKB" id="P24384"/>
    </source>
</evidence>
<evidence type="ECO:0000250" key="3">
    <source>
        <dbReference type="UniProtKB" id="Q14562"/>
    </source>
</evidence>
<evidence type="ECO:0000255" key="4">
    <source>
        <dbReference type="PROSITE-ProRule" id="PRU00180"/>
    </source>
</evidence>
<evidence type="ECO:0000255" key="5">
    <source>
        <dbReference type="PROSITE-ProRule" id="PRU00541"/>
    </source>
</evidence>
<evidence type="ECO:0000255" key="6">
    <source>
        <dbReference type="PROSITE-ProRule" id="PRU00542"/>
    </source>
</evidence>
<evidence type="ECO:0000256" key="7">
    <source>
        <dbReference type="SAM" id="MobiDB-lite"/>
    </source>
</evidence>
<evidence type="ECO:0000305" key="8"/>
<protein>
    <recommendedName>
        <fullName>ATP-dependent RNA helicase DHX8</fullName>
        <ecNumber evidence="2">3.6.4.13</ecNumber>
    </recommendedName>
    <alternativeName>
        <fullName>DEAH box protein 8</fullName>
    </alternativeName>
</protein>
<comment type="function">
    <text evidence="3">Involved in pre-mRNA splicing as component of the spliceosome. Facilitates nuclear export of spliced mRNA by releasing the RNA from the spliceosome.</text>
</comment>
<comment type="catalytic activity">
    <reaction evidence="2">
        <text>ATP + H2O = ADP + phosphate + H(+)</text>
        <dbReference type="Rhea" id="RHEA:13065"/>
        <dbReference type="ChEBI" id="CHEBI:15377"/>
        <dbReference type="ChEBI" id="CHEBI:15378"/>
        <dbReference type="ChEBI" id="CHEBI:30616"/>
        <dbReference type="ChEBI" id="CHEBI:43474"/>
        <dbReference type="ChEBI" id="CHEBI:456216"/>
        <dbReference type="EC" id="3.6.4.13"/>
    </reaction>
</comment>
<comment type="subunit">
    <text evidence="3">Identified in the spliceosome C complex. Interacts with ARRB2; the interaction is detected in the nucleus upon OR1D2 stimulation. Interacts with SRRM2. Interacts with CACTIN.</text>
</comment>
<comment type="subcellular location">
    <subcellularLocation>
        <location evidence="3">Nucleus</location>
    </subcellularLocation>
</comment>
<comment type="domain">
    <text evidence="1">The RS domain confers a nuclear localization signal, and appears to facilitate the interaction with the spliceosome.</text>
</comment>
<comment type="similarity">
    <text evidence="8">Belongs to the DEAD box helicase family. DEAH subfamily. DDX8/PRP22 sub-subfamily.</text>
</comment>
<name>DHX8_MOUSE</name>
<reference key="1">
    <citation type="journal article" date="2009" name="PLoS Biol.">
        <title>Lineage-specific biology revealed by a finished genome assembly of the mouse.</title>
        <authorList>
            <person name="Church D.M."/>
            <person name="Goodstadt L."/>
            <person name="Hillier L.W."/>
            <person name="Zody M.C."/>
            <person name="Goldstein S."/>
            <person name="She X."/>
            <person name="Bult C.J."/>
            <person name="Agarwala R."/>
            <person name="Cherry J.L."/>
            <person name="DiCuccio M."/>
            <person name="Hlavina W."/>
            <person name="Kapustin Y."/>
            <person name="Meric P."/>
            <person name="Maglott D."/>
            <person name="Birtle Z."/>
            <person name="Marques A.C."/>
            <person name="Graves T."/>
            <person name="Zhou S."/>
            <person name="Teague B."/>
            <person name="Potamousis K."/>
            <person name="Churas C."/>
            <person name="Place M."/>
            <person name="Herschleb J."/>
            <person name="Runnheim R."/>
            <person name="Forrest D."/>
            <person name="Amos-Landgraf J."/>
            <person name="Schwartz D.C."/>
            <person name="Cheng Z."/>
            <person name="Lindblad-Toh K."/>
            <person name="Eichler E.E."/>
            <person name="Ponting C.P."/>
        </authorList>
    </citation>
    <scope>NUCLEOTIDE SEQUENCE [LARGE SCALE GENOMIC DNA]</scope>
    <source>
        <strain>C57BL/6J</strain>
    </source>
</reference>
<reference key="2">
    <citation type="journal article" date="2004" name="Genome Res.">
        <title>The status, quality, and expansion of the NIH full-length cDNA project: the Mammalian Gene Collection (MGC).</title>
        <authorList>
            <consortium name="The MGC Project Team"/>
        </authorList>
    </citation>
    <scope>NUCLEOTIDE SEQUENCE [LARGE SCALE MRNA]</scope>
    <source>
        <tissue>Brain</tissue>
    </source>
</reference>
<proteinExistence type="evidence at transcript level"/>
<sequence length="1244" mass="142572">MAVAVAAAGVLMGSEPGPAEELAKLEYLSLVSKVCTELDNHLGINDKDLAEFVISLAEKNTTFDTFKASLVKNGAEFTDSLISNLLRLIQTMRPPAKPSTSKDPVVKPKTEKEKLRELFPVLCQPDNPSARTMLDEEDVKVAVDVLKELEALMPSAAGQEKQRDPEHRDRTKKKKRSRSRDRDRDRDRDRDRDRDRDRDRDKDRERDRDRERDRERDRERDHKRRHRSRSRSHSRTRERTKGKSRYRSRSRSQSPFKDRKDREKYGERNLDRWRDKHVDRPPPEEPAIGDIYNGKVTSIMQFGCFVQLEGLRKRWEGLVHISELRREGRVANVADVVSKGQRVKVKVLSFTGTKTSLSMKDVDQETGEDLNPNRRRNLVGETNEETSMRNPDRPTHLSLVSAPEVEDDSLERKRLTRISDPEKWEIKQMIAANVLSKEEFPDFDEETGILPKVDDEEDEDLEIELVEEEPPFLRGHTKQSMDMSPIKIVKNPDGSLSQAAMMQSALAKERRELKQAQREAEMDSIPMGLNKHWVDPLPDAEGRQIAANMRGIGMMPNDIPEWKKHAFGGNKASYGKKTQMSILEQRESLPIYKLKEQLVQAVHDNQILIVIGETGSGKTTQITQYLAEAGYTSRGKIGCTQPRRVAAMSVAKRVSEEFGCCLGQEVGYTIRFEDCTSPETVIKYMTDGMLLRECLIDPDLTQYAIIMLDEAHERTIHTDVLFGLLKKTVQKRQDMKLIVTSATLDAVKFSQYFYEAPIFTIPGRTYPVEILYTKEPETDYLDASLITVMQIHLTEPPGDILVFLTGQEEIDTACEILYERMKSLGPDVPELIILPVYSALPSEMQTRIFDPAPPGSRKVVIATNIAETSLTIDGIYYVVDPGFVKQKVYNSKTGIDQLVVTPISQAQAKQRAGRAGRTGPGKCYRLYTERAYRDEMLTTNVPEIQRTNLASTVLSLKAMGINDLLSFDFMDAPPMETLITAMEQLYTLGALDDEGLLTRLGRRMAEFPLEPMLCKMLIMSVHLGCSEEMLTIVSMLSVQNVFYRPKDKQALADQKKAKFHQTEGDHLTLLAVYNSWKNNKFSNPWCYENFIQARSLRRAQDIRKQMLGIMDRHKLDVVSCGKSTVRVQKAICSGFFRNAAKKDPQEGYRTLIDQQVVYIHPSSALFNRQPEWVVYHELVLTTKEYMREVTTIDPRWLVEFAPAFFKVSDPTKLSKQKKQQRLEPLYNRYEEPNAWRISRAFRRR</sequence>
<keyword id="KW-0067">ATP-binding</keyword>
<keyword id="KW-0347">Helicase</keyword>
<keyword id="KW-0378">Hydrolase</keyword>
<keyword id="KW-1017">Isopeptide bond</keyword>
<keyword id="KW-0507">mRNA processing</keyword>
<keyword id="KW-0508">mRNA splicing</keyword>
<keyword id="KW-0547">Nucleotide-binding</keyword>
<keyword id="KW-0539">Nucleus</keyword>
<keyword id="KW-0597">Phosphoprotein</keyword>
<keyword id="KW-1185">Reference proteome</keyword>
<keyword id="KW-0747">Spliceosome</keyword>
<keyword id="KW-0832">Ubl conjugation</keyword>